<accession>Q5L010</accession>
<feature type="chain" id="PRO_1000066944" description="UPF0309 protein GK1441">
    <location>
        <begin position="1"/>
        <end position="251"/>
    </location>
</feature>
<feature type="domain" description="SIS" evidence="1">
    <location>
        <begin position="31"/>
        <end position="214"/>
    </location>
</feature>
<protein>
    <recommendedName>
        <fullName evidence="1">UPF0309 protein GK1441</fullName>
    </recommendedName>
</protein>
<organism>
    <name type="scientific">Geobacillus kaustophilus (strain HTA426)</name>
    <dbReference type="NCBI Taxonomy" id="235909"/>
    <lineage>
        <taxon>Bacteria</taxon>
        <taxon>Bacillati</taxon>
        <taxon>Bacillota</taxon>
        <taxon>Bacilli</taxon>
        <taxon>Bacillales</taxon>
        <taxon>Anoxybacillaceae</taxon>
        <taxon>Geobacillus</taxon>
        <taxon>Geobacillus thermoleovorans group</taxon>
    </lineage>
</organism>
<name>Y1441_GEOKA</name>
<evidence type="ECO:0000255" key="1">
    <source>
        <dbReference type="HAMAP-Rule" id="MF_01240"/>
    </source>
</evidence>
<proteinExistence type="inferred from homology"/>
<gene>
    <name type="ordered locus">GK1441</name>
</gene>
<dbReference type="EMBL" id="BA000043">
    <property type="protein sequence ID" value="BAD75726.1"/>
    <property type="molecule type" value="Genomic_DNA"/>
</dbReference>
<dbReference type="RefSeq" id="WP_011230937.1">
    <property type="nucleotide sequence ID" value="NC_006510.1"/>
</dbReference>
<dbReference type="SMR" id="Q5L010"/>
<dbReference type="STRING" id="235909.GK1441"/>
<dbReference type="KEGG" id="gka:GK1441"/>
<dbReference type="eggNOG" id="COG4821">
    <property type="taxonomic scope" value="Bacteria"/>
</dbReference>
<dbReference type="HOGENOM" id="CLU_089975_0_0_9"/>
<dbReference type="Proteomes" id="UP000001172">
    <property type="component" value="Chromosome"/>
</dbReference>
<dbReference type="GO" id="GO:0097367">
    <property type="term" value="F:carbohydrate derivative binding"/>
    <property type="evidence" value="ECO:0007669"/>
    <property type="project" value="InterPro"/>
</dbReference>
<dbReference type="GO" id="GO:1901135">
    <property type="term" value="P:carbohydrate derivative metabolic process"/>
    <property type="evidence" value="ECO:0007669"/>
    <property type="project" value="InterPro"/>
</dbReference>
<dbReference type="CDD" id="cd05013">
    <property type="entry name" value="SIS_RpiR"/>
    <property type="match status" value="1"/>
</dbReference>
<dbReference type="Gene3D" id="3.40.50.10490">
    <property type="entry name" value="Glucose-6-phosphate isomerase like protein, domain 1"/>
    <property type="match status" value="1"/>
</dbReference>
<dbReference type="HAMAP" id="MF_01240">
    <property type="entry name" value="UPF0309"/>
    <property type="match status" value="1"/>
</dbReference>
<dbReference type="InterPro" id="IPR035472">
    <property type="entry name" value="RpiR-like_SIS"/>
</dbReference>
<dbReference type="InterPro" id="IPR001347">
    <property type="entry name" value="SIS_dom"/>
</dbReference>
<dbReference type="InterPro" id="IPR046348">
    <property type="entry name" value="SIS_dom_sf"/>
</dbReference>
<dbReference type="InterPro" id="IPR050099">
    <property type="entry name" value="SIS_GmhA/DiaA_subfam"/>
</dbReference>
<dbReference type="InterPro" id="IPR022951">
    <property type="entry name" value="UPF0309"/>
</dbReference>
<dbReference type="NCBIfam" id="NF002805">
    <property type="entry name" value="PRK02947.1"/>
    <property type="match status" value="1"/>
</dbReference>
<dbReference type="PANTHER" id="PTHR30390:SF7">
    <property type="entry name" value="PHOSPHOHEPTOSE ISOMERASE"/>
    <property type="match status" value="1"/>
</dbReference>
<dbReference type="PANTHER" id="PTHR30390">
    <property type="entry name" value="SEDOHEPTULOSE 7-PHOSPHATE ISOMERASE / DNAA INITIATOR-ASSOCIATING FACTOR FOR REPLICATION INITIATION"/>
    <property type="match status" value="1"/>
</dbReference>
<dbReference type="Pfam" id="PF13580">
    <property type="entry name" value="SIS_2"/>
    <property type="match status" value="1"/>
</dbReference>
<dbReference type="SUPFAM" id="SSF53697">
    <property type="entry name" value="SIS domain"/>
    <property type="match status" value="1"/>
</dbReference>
<dbReference type="PROSITE" id="PS51464">
    <property type="entry name" value="SIS"/>
    <property type="match status" value="1"/>
</dbReference>
<sequence length="251" mass="27850">MINQYFQKINEHLELVLSHEKDNLKKAAHMVSEAIQNGGIVQLFGCGHSHILTEEVFYRAGGLVPVKPIFVEPLMLHEGAVRSSMLERMNDLAQNFINHEDIRPEDVFFVLSTSGRNPVPIDVALAAKEKGAYTIAITSLEYSKSQPSRHKSGRLLYEVVDLVIDNHCVRGDAILAHPNVSVPFAPTSTVIGSAILNAVFAEAIVLMAENGIEPPIFLSGNIEGADEHNRRWVEKYKERIPVLVEGHQLSQ</sequence>
<keyword id="KW-1185">Reference proteome</keyword>
<comment type="similarity">
    <text evidence="1">Belongs to the UPF0309 family.</text>
</comment>
<reference key="1">
    <citation type="journal article" date="2004" name="Nucleic Acids Res.">
        <title>Thermoadaptation trait revealed by the genome sequence of thermophilic Geobacillus kaustophilus.</title>
        <authorList>
            <person name="Takami H."/>
            <person name="Takaki Y."/>
            <person name="Chee G.-J."/>
            <person name="Nishi S."/>
            <person name="Shimamura S."/>
            <person name="Suzuki H."/>
            <person name="Matsui S."/>
            <person name="Uchiyama I."/>
        </authorList>
    </citation>
    <scope>NUCLEOTIDE SEQUENCE [LARGE SCALE GENOMIC DNA]</scope>
    <source>
        <strain>HTA426</strain>
    </source>
</reference>